<evidence type="ECO:0000250" key="1"/>
<evidence type="ECO:0000255" key="2">
    <source>
        <dbReference type="PROSITE-ProRule" id="PRU00042"/>
    </source>
</evidence>
<evidence type="ECO:0000256" key="3">
    <source>
        <dbReference type="SAM" id="MobiDB-lite"/>
    </source>
</evidence>
<evidence type="ECO:0000269" key="4">
    <source>
    </source>
</evidence>
<evidence type="ECO:0000305" key="5"/>
<gene>
    <name type="primary">glis2</name>
    <name type="synonym">nkl</name>
</gene>
<feature type="chain" id="PRO_0000286985" description="Zinc finger protein GLIS2">
    <location>
        <begin position="1"/>
        <end position="492"/>
    </location>
</feature>
<feature type="zinc finger region" description="C2H2-type 1" evidence="2">
    <location>
        <begin position="158"/>
        <end position="183"/>
    </location>
</feature>
<feature type="zinc finger region" description="C2H2-type 2; degenerate" evidence="2">
    <location>
        <begin position="192"/>
        <end position="219"/>
    </location>
</feature>
<feature type="zinc finger region" description="C2H2-type 3" evidence="2">
    <location>
        <begin position="225"/>
        <end position="247"/>
    </location>
</feature>
<feature type="zinc finger region" description="C2H2-type 4" evidence="2">
    <location>
        <begin position="253"/>
        <end position="277"/>
    </location>
</feature>
<feature type="zinc finger region" description="C2H2-type 5" evidence="2">
    <location>
        <begin position="283"/>
        <end position="307"/>
    </location>
</feature>
<feature type="region of interest" description="Disordered" evidence="3">
    <location>
        <begin position="49"/>
        <end position="101"/>
    </location>
</feature>
<feature type="region of interest" description="Transcription activation" evidence="1">
    <location>
        <begin position="69"/>
        <end position="129"/>
    </location>
</feature>
<feature type="region of interest" description="Transcription repression" evidence="1">
    <location>
        <begin position="138"/>
        <end position="161"/>
    </location>
</feature>
<feature type="region of interest" description="Disordered" evidence="3">
    <location>
        <begin position="423"/>
        <end position="450"/>
    </location>
</feature>
<feature type="compositionally biased region" description="Low complexity" evidence="3">
    <location>
        <begin position="82"/>
        <end position="97"/>
    </location>
</feature>
<feature type="compositionally biased region" description="Basic and acidic residues" evidence="3">
    <location>
        <begin position="423"/>
        <end position="444"/>
    </location>
</feature>
<feature type="sequence conflict" description="In Ref. 2; AAH84941." evidence="5" ref="2">
    <original>P</original>
    <variation>L</variation>
    <location>
        <position position="136"/>
    </location>
</feature>
<name>GLIS2_XENLA</name>
<sequence length="492" mass="53959">MHSLDEPLDLKLSISKLRAAREKRERIGANARKRSVHHELMIRDDGTTVITPICSSPPPGFRYRDGDSPPFSSPPIVDLSLSPPSGTDSPSRSSLSPDRAAGDTLIDNPLLRCGGDSASSPFQFFLPLGSGLQLPPSMFMSPPKENRLSLEFTEQKQLVCQWAKCNRLFELLQELVDHVNDFHVKPEKDAGYCCHWEGCARRGRGFNARYKMLIHIRTHTNERPHCCPTCHKSFSRLENLKIHNRSHTGEKPYMCPYEGCNKRYSNSSDRFKHTRTHYVDKPYYCKMPGCQKRYTDPSSLRKHIKAHGHFISHQQRQLLKIHQPPKLPATGDSNYTNGTQLIIPNPAAIFGSQSLPIPLTPGPLDLSSLACSSVASALAGLPNPMLTLAGSPLNLAKGSLLSQAYSAAGLGLPLISLVTSGKVENEKRPKGQRGDSSERTDGSKLRPGSIEGLSLLPRGVLDLSPGVGSESLLPGWVVIPPGSVLLKPAVVN</sequence>
<keyword id="KW-0010">Activator</keyword>
<keyword id="KW-0963">Cytoplasm</keyword>
<keyword id="KW-0217">Developmental protein</keyword>
<keyword id="KW-0221">Differentiation</keyword>
<keyword id="KW-0238">DNA-binding</keyword>
<keyword id="KW-0479">Metal-binding</keyword>
<keyword id="KW-0524">Neurogenesis</keyword>
<keyword id="KW-0539">Nucleus</keyword>
<keyword id="KW-1185">Reference proteome</keyword>
<keyword id="KW-0677">Repeat</keyword>
<keyword id="KW-0678">Repressor</keyword>
<keyword id="KW-0804">Transcription</keyword>
<keyword id="KW-0805">Transcription regulation</keyword>
<keyword id="KW-0862">Zinc</keyword>
<keyword id="KW-0863">Zinc-finger</keyword>
<comment type="function">
    <text evidence="4">Can act either as a transcription repressor or as a transcription activator, depending on the cell context. May be involved in neuron differentiation.</text>
</comment>
<comment type="subcellular location">
    <subcellularLocation>
        <location evidence="1">Nucleus speckle</location>
    </subcellularLocation>
    <subcellularLocation>
        <location evidence="1">Cytoplasm</location>
    </subcellularLocation>
</comment>
<comment type="developmental stage">
    <text evidence="4">In neural plate stage embryos, expressed in precursors of primary sensory and motor neurons. At tailbud stages, expression persists in neural tube and is up-regulated in anterior structures such as eye and brain, and in branchial arches.</text>
</comment>
<comment type="induction">
    <text evidence="4">By ngn1.</text>
</comment>
<comment type="domain">
    <text evidence="1">The C2H2-type zinc finger 1 has a major repressor function.</text>
</comment>
<comment type="similarity">
    <text evidence="5">Belongs to the GLI C2H2-type zinc-finger protein family.</text>
</comment>
<accession>Q98T94</accession>
<accession>Q5U4V3</accession>
<organism>
    <name type="scientific">Xenopus laevis</name>
    <name type="common">African clawed frog</name>
    <dbReference type="NCBI Taxonomy" id="8355"/>
    <lineage>
        <taxon>Eukaryota</taxon>
        <taxon>Metazoa</taxon>
        <taxon>Chordata</taxon>
        <taxon>Craniata</taxon>
        <taxon>Vertebrata</taxon>
        <taxon>Euteleostomi</taxon>
        <taxon>Amphibia</taxon>
        <taxon>Batrachia</taxon>
        <taxon>Anura</taxon>
        <taxon>Pipoidea</taxon>
        <taxon>Pipidae</taxon>
        <taxon>Xenopodinae</taxon>
        <taxon>Xenopus</taxon>
        <taxon>Xenopus</taxon>
    </lineage>
</organism>
<dbReference type="EMBL" id="AF249341">
    <property type="protein sequence ID" value="AAK28411.1"/>
    <property type="molecule type" value="mRNA"/>
</dbReference>
<dbReference type="EMBL" id="BC084941">
    <property type="protein sequence ID" value="AAH84941.1"/>
    <property type="molecule type" value="mRNA"/>
</dbReference>
<dbReference type="RefSeq" id="NP_001082092.1">
    <property type="nucleotide sequence ID" value="NM_001088623.1"/>
</dbReference>
<dbReference type="SMR" id="Q98T94"/>
<dbReference type="GeneID" id="398220"/>
<dbReference type="KEGG" id="xla:398220"/>
<dbReference type="AGR" id="Xenbase:XB-GENE-6251812"/>
<dbReference type="CTD" id="398220"/>
<dbReference type="Xenbase" id="XB-GENE-6251812">
    <property type="gene designation" value="glis2.S"/>
</dbReference>
<dbReference type="OrthoDB" id="3214149at2759"/>
<dbReference type="Proteomes" id="UP000186698">
    <property type="component" value="Chromosome 9_10S"/>
</dbReference>
<dbReference type="Bgee" id="398220">
    <property type="expression patterns" value="Expressed in lung and 16 other cell types or tissues"/>
</dbReference>
<dbReference type="GO" id="GO:0005737">
    <property type="term" value="C:cytoplasm"/>
    <property type="evidence" value="ECO:0007669"/>
    <property type="project" value="UniProtKB-SubCell"/>
</dbReference>
<dbReference type="GO" id="GO:0016607">
    <property type="term" value="C:nuclear speck"/>
    <property type="evidence" value="ECO:0000250"/>
    <property type="project" value="UniProtKB"/>
</dbReference>
<dbReference type="GO" id="GO:0005634">
    <property type="term" value="C:nucleus"/>
    <property type="evidence" value="ECO:0000318"/>
    <property type="project" value="GO_Central"/>
</dbReference>
<dbReference type="GO" id="GO:0000981">
    <property type="term" value="F:DNA-binding transcription factor activity, RNA polymerase II-specific"/>
    <property type="evidence" value="ECO:0000318"/>
    <property type="project" value="GO_Central"/>
</dbReference>
<dbReference type="GO" id="GO:0000978">
    <property type="term" value="F:RNA polymerase II cis-regulatory region sequence-specific DNA binding"/>
    <property type="evidence" value="ECO:0000318"/>
    <property type="project" value="GO_Central"/>
</dbReference>
<dbReference type="GO" id="GO:0008270">
    <property type="term" value="F:zinc ion binding"/>
    <property type="evidence" value="ECO:0007669"/>
    <property type="project" value="UniProtKB-KW"/>
</dbReference>
<dbReference type="GO" id="GO:0030154">
    <property type="term" value="P:cell differentiation"/>
    <property type="evidence" value="ECO:0007669"/>
    <property type="project" value="UniProtKB-KW"/>
</dbReference>
<dbReference type="GO" id="GO:0045892">
    <property type="term" value="P:negative regulation of DNA-templated transcription"/>
    <property type="evidence" value="ECO:0000250"/>
    <property type="project" value="UniProtKB"/>
</dbReference>
<dbReference type="GO" id="GO:0007399">
    <property type="term" value="P:nervous system development"/>
    <property type="evidence" value="ECO:0007669"/>
    <property type="project" value="UniProtKB-KW"/>
</dbReference>
<dbReference type="GO" id="GO:0045893">
    <property type="term" value="P:positive regulation of DNA-templated transcription"/>
    <property type="evidence" value="ECO:0000250"/>
    <property type="project" value="UniProtKB"/>
</dbReference>
<dbReference type="GO" id="GO:0006357">
    <property type="term" value="P:regulation of transcription by RNA polymerase II"/>
    <property type="evidence" value="ECO:0000318"/>
    <property type="project" value="GO_Central"/>
</dbReference>
<dbReference type="FunFam" id="3.30.160.60:FF:000019">
    <property type="entry name" value="GLI family zinc finger 3"/>
    <property type="match status" value="1"/>
</dbReference>
<dbReference type="FunFam" id="3.30.160.60:FF:000310">
    <property type="entry name" value="GLIS family zinc finger 2"/>
    <property type="match status" value="1"/>
</dbReference>
<dbReference type="FunFam" id="3.30.160.60:FF:000357">
    <property type="entry name" value="GLIS family zinc finger 2"/>
    <property type="match status" value="1"/>
</dbReference>
<dbReference type="FunFam" id="3.30.160.60:FF:000359">
    <property type="entry name" value="GLIS family zinc finger 2"/>
    <property type="match status" value="1"/>
</dbReference>
<dbReference type="FunFam" id="3.30.160.60:FF:000532">
    <property type="entry name" value="GLIS family zinc finger 2"/>
    <property type="match status" value="1"/>
</dbReference>
<dbReference type="Gene3D" id="3.30.160.60">
    <property type="entry name" value="Classic Zinc Finger"/>
    <property type="match status" value="5"/>
</dbReference>
<dbReference type="InterPro" id="IPR043359">
    <property type="entry name" value="GLI-like"/>
</dbReference>
<dbReference type="InterPro" id="IPR056436">
    <property type="entry name" value="Znf-C2H2_ZIC1-5/GLI1-3-like"/>
</dbReference>
<dbReference type="InterPro" id="IPR036236">
    <property type="entry name" value="Znf_C2H2_sf"/>
</dbReference>
<dbReference type="InterPro" id="IPR013087">
    <property type="entry name" value="Znf_C2H2_type"/>
</dbReference>
<dbReference type="PANTHER" id="PTHR45718:SF8">
    <property type="entry name" value="GLIS FAMILY ZINC FINGER 2"/>
    <property type="match status" value="1"/>
</dbReference>
<dbReference type="PANTHER" id="PTHR45718">
    <property type="entry name" value="TRANSCRIPTIONAL ACTIVATOR CUBITUS INTERRUPTUS"/>
    <property type="match status" value="1"/>
</dbReference>
<dbReference type="Pfam" id="PF00096">
    <property type="entry name" value="zf-C2H2"/>
    <property type="match status" value="3"/>
</dbReference>
<dbReference type="Pfam" id="PF23561">
    <property type="entry name" value="zf-C2H2_15"/>
    <property type="match status" value="1"/>
</dbReference>
<dbReference type="SMART" id="SM00355">
    <property type="entry name" value="ZnF_C2H2"/>
    <property type="match status" value="5"/>
</dbReference>
<dbReference type="SUPFAM" id="SSF57667">
    <property type="entry name" value="beta-beta-alpha zinc fingers"/>
    <property type="match status" value="3"/>
</dbReference>
<dbReference type="PROSITE" id="PS00028">
    <property type="entry name" value="ZINC_FINGER_C2H2_1"/>
    <property type="match status" value="4"/>
</dbReference>
<dbReference type="PROSITE" id="PS50157">
    <property type="entry name" value="ZINC_FINGER_C2H2_2"/>
    <property type="match status" value="4"/>
</dbReference>
<reference key="1">
    <citation type="journal article" date="2001" name="Development">
        <title>Identification of NKL, a novel Gli-Kruppel zinc-finger protein that promotes neuronal differentiation.</title>
        <authorList>
            <person name="Lamar E."/>
            <person name="Kintner C."/>
            <person name="Goulding M."/>
        </authorList>
    </citation>
    <scope>NUCLEOTIDE SEQUENCE [MRNA]</scope>
    <scope>DEVELOPMENTAL STAGE</scope>
    <scope>INDUCTION BY NGN1</scope>
    <scope>FUNCTION</scope>
</reference>
<reference key="2">
    <citation type="submission" date="2004-10" db="EMBL/GenBank/DDBJ databases">
        <authorList>
            <consortium name="NIH - Xenopus Gene Collection (XGC) project"/>
        </authorList>
    </citation>
    <scope>NUCLEOTIDE SEQUENCE [LARGE SCALE MRNA]</scope>
    <source>
        <tissue>Kidney</tissue>
    </source>
</reference>
<proteinExistence type="evidence at transcript level"/>
<protein>
    <recommendedName>
        <fullName>Zinc finger protein GLIS2</fullName>
    </recommendedName>
    <alternativeName>
        <fullName>GLI-similar 2</fullName>
    </alternativeName>
    <alternativeName>
        <fullName>Neuronal Krueppel-like protein</fullName>
    </alternativeName>
</protein>